<name>GUAA_PHANO</name>
<organism>
    <name type="scientific">Phaeosphaeria nodorum (strain SN15 / ATCC MYA-4574 / FGSC 10173)</name>
    <name type="common">Glume blotch fungus</name>
    <name type="synonym">Parastagonospora nodorum</name>
    <dbReference type="NCBI Taxonomy" id="321614"/>
    <lineage>
        <taxon>Eukaryota</taxon>
        <taxon>Fungi</taxon>
        <taxon>Dikarya</taxon>
        <taxon>Ascomycota</taxon>
        <taxon>Pezizomycotina</taxon>
        <taxon>Dothideomycetes</taxon>
        <taxon>Pleosporomycetidae</taxon>
        <taxon>Pleosporales</taxon>
        <taxon>Pleosporineae</taxon>
        <taxon>Phaeosphaeriaceae</taxon>
        <taxon>Parastagonospora</taxon>
    </lineage>
</organism>
<proteinExistence type="inferred from homology"/>
<dbReference type="EC" id="6.3.5.2" evidence="1"/>
<dbReference type="EMBL" id="CH445337">
    <property type="protein sequence ID" value="EAT84008.1"/>
    <property type="molecule type" value="Genomic_DNA"/>
</dbReference>
<dbReference type="RefSeq" id="XP_001799145.1">
    <property type="nucleotide sequence ID" value="XM_001799093.1"/>
</dbReference>
<dbReference type="SMR" id="Q0UHC4"/>
<dbReference type="FunCoup" id="Q0UHC4">
    <property type="interactions" value="1012"/>
</dbReference>
<dbReference type="STRING" id="321614.Q0UHC4"/>
<dbReference type="MEROPS" id="C26.957"/>
<dbReference type="EnsemblFungi" id="SNOT_08840">
    <property type="protein sequence ID" value="SNOT_08840"/>
    <property type="gene ID" value="SNOG_08840"/>
</dbReference>
<dbReference type="GeneID" id="5976044"/>
<dbReference type="KEGG" id="pno:SNOG_08840"/>
<dbReference type="VEuPathDB" id="FungiDB:JI435_088400"/>
<dbReference type="eggNOG" id="KOG1622">
    <property type="taxonomic scope" value="Eukaryota"/>
</dbReference>
<dbReference type="HOGENOM" id="CLU_014340_0_5_1"/>
<dbReference type="InParanoid" id="Q0UHC4"/>
<dbReference type="OMA" id="IWQSFAV"/>
<dbReference type="OrthoDB" id="1724632at2759"/>
<dbReference type="UniPathway" id="UPA00189">
    <property type="reaction ID" value="UER00296"/>
</dbReference>
<dbReference type="Proteomes" id="UP000001055">
    <property type="component" value="Unassembled WGS sequence"/>
</dbReference>
<dbReference type="GO" id="GO:0005829">
    <property type="term" value="C:cytosol"/>
    <property type="evidence" value="ECO:0000318"/>
    <property type="project" value="GO_Central"/>
</dbReference>
<dbReference type="GO" id="GO:0005524">
    <property type="term" value="F:ATP binding"/>
    <property type="evidence" value="ECO:0007669"/>
    <property type="project" value="UniProtKB-KW"/>
</dbReference>
<dbReference type="GO" id="GO:0003922">
    <property type="term" value="F:GMP synthase (glutamine-hydrolyzing) activity"/>
    <property type="evidence" value="ECO:0000250"/>
    <property type="project" value="UniProtKB"/>
</dbReference>
<dbReference type="GO" id="GO:0003921">
    <property type="term" value="F:GMP synthase activity"/>
    <property type="evidence" value="ECO:0000318"/>
    <property type="project" value="GO_Central"/>
</dbReference>
<dbReference type="GO" id="GO:0006177">
    <property type="term" value="P:GMP biosynthetic process"/>
    <property type="evidence" value="ECO:0000250"/>
    <property type="project" value="UniProtKB"/>
</dbReference>
<dbReference type="CDD" id="cd01742">
    <property type="entry name" value="GATase1_GMP_Synthase"/>
    <property type="match status" value="1"/>
</dbReference>
<dbReference type="CDD" id="cd01997">
    <property type="entry name" value="GMP_synthase_C"/>
    <property type="match status" value="1"/>
</dbReference>
<dbReference type="FunFam" id="3.30.300.10:FF:000002">
    <property type="entry name" value="GMP synthase [glutamine-hydrolyzing]"/>
    <property type="match status" value="1"/>
</dbReference>
<dbReference type="FunFam" id="3.40.50.620:FF:000001">
    <property type="entry name" value="GMP synthase [glutamine-hydrolyzing]"/>
    <property type="match status" value="1"/>
</dbReference>
<dbReference type="FunFam" id="3.40.50.880:FF:000001">
    <property type="entry name" value="GMP synthase [glutamine-hydrolyzing]"/>
    <property type="match status" value="1"/>
</dbReference>
<dbReference type="Gene3D" id="3.30.300.10">
    <property type="match status" value="1"/>
</dbReference>
<dbReference type="Gene3D" id="3.40.50.880">
    <property type="match status" value="1"/>
</dbReference>
<dbReference type="Gene3D" id="3.40.50.620">
    <property type="entry name" value="HUPs"/>
    <property type="match status" value="1"/>
</dbReference>
<dbReference type="HAMAP" id="MF_00344">
    <property type="entry name" value="GMP_synthase"/>
    <property type="match status" value="1"/>
</dbReference>
<dbReference type="InterPro" id="IPR029062">
    <property type="entry name" value="Class_I_gatase-like"/>
</dbReference>
<dbReference type="InterPro" id="IPR017926">
    <property type="entry name" value="GATASE"/>
</dbReference>
<dbReference type="InterPro" id="IPR001674">
    <property type="entry name" value="GMP_synth_C"/>
</dbReference>
<dbReference type="InterPro" id="IPR004739">
    <property type="entry name" value="GMP_synth_GATase"/>
</dbReference>
<dbReference type="InterPro" id="IPR022955">
    <property type="entry name" value="GMP_synthase"/>
</dbReference>
<dbReference type="InterPro" id="IPR025777">
    <property type="entry name" value="GMPS_ATP_PPase_dom"/>
</dbReference>
<dbReference type="InterPro" id="IPR022310">
    <property type="entry name" value="NAD/GMP_synthase"/>
</dbReference>
<dbReference type="InterPro" id="IPR014729">
    <property type="entry name" value="Rossmann-like_a/b/a_fold"/>
</dbReference>
<dbReference type="NCBIfam" id="TIGR00884">
    <property type="entry name" value="guaA_Cterm"/>
    <property type="match status" value="1"/>
</dbReference>
<dbReference type="NCBIfam" id="TIGR00888">
    <property type="entry name" value="guaA_Nterm"/>
    <property type="match status" value="1"/>
</dbReference>
<dbReference type="NCBIfam" id="NF000848">
    <property type="entry name" value="PRK00074.1"/>
    <property type="match status" value="1"/>
</dbReference>
<dbReference type="PANTHER" id="PTHR11922:SF2">
    <property type="entry name" value="GMP SYNTHASE [GLUTAMINE-HYDROLYZING]"/>
    <property type="match status" value="1"/>
</dbReference>
<dbReference type="PANTHER" id="PTHR11922">
    <property type="entry name" value="GMP SYNTHASE-RELATED"/>
    <property type="match status" value="1"/>
</dbReference>
<dbReference type="Pfam" id="PF00117">
    <property type="entry name" value="GATase"/>
    <property type="match status" value="1"/>
</dbReference>
<dbReference type="Pfam" id="PF00958">
    <property type="entry name" value="GMP_synt_C"/>
    <property type="match status" value="1"/>
</dbReference>
<dbReference type="Pfam" id="PF02540">
    <property type="entry name" value="NAD_synthase"/>
    <property type="match status" value="1"/>
</dbReference>
<dbReference type="PRINTS" id="PR00097">
    <property type="entry name" value="ANTSNTHASEII"/>
</dbReference>
<dbReference type="PRINTS" id="PR00096">
    <property type="entry name" value="GATASE"/>
</dbReference>
<dbReference type="SUPFAM" id="SSF52402">
    <property type="entry name" value="Adenine nucleotide alpha hydrolases-like"/>
    <property type="match status" value="1"/>
</dbReference>
<dbReference type="SUPFAM" id="SSF52317">
    <property type="entry name" value="Class I glutamine amidotransferase-like"/>
    <property type="match status" value="1"/>
</dbReference>
<dbReference type="SUPFAM" id="SSF54810">
    <property type="entry name" value="GMP synthetase C-terminal dimerisation domain"/>
    <property type="match status" value="1"/>
</dbReference>
<dbReference type="PROSITE" id="PS51273">
    <property type="entry name" value="GATASE_TYPE_1"/>
    <property type="match status" value="1"/>
</dbReference>
<dbReference type="PROSITE" id="PS51553">
    <property type="entry name" value="GMPS_ATP_PPASE"/>
    <property type="match status" value="1"/>
</dbReference>
<comment type="function">
    <text evidence="1">Catalyzes the conversion of xanthine monophosphate (XMP) to GMP in the presence of glutamine and ATP through an adenyl-XMP intermediate.</text>
</comment>
<comment type="catalytic activity">
    <reaction evidence="1">
        <text>XMP + L-glutamine + ATP + H2O = GMP + L-glutamate + AMP + diphosphate + 2 H(+)</text>
        <dbReference type="Rhea" id="RHEA:11680"/>
        <dbReference type="ChEBI" id="CHEBI:15377"/>
        <dbReference type="ChEBI" id="CHEBI:15378"/>
        <dbReference type="ChEBI" id="CHEBI:29985"/>
        <dbReference type="ChEBI" id="CHEBI:30616"/>
        <dbReference type="ChEBI" id="CHEBI:33019"/>
        <dbReference type="ChEBI" id="CHEBI:57464"/>
        <dbReference type="ChEBI" id="CHEBI:58115"/>
        <dbReference type="ChEBI" id="CHEBI:58359"/>
        <dbReference type="ChEBI" id="CHEBI:456215"/>
        <dbReference type="EC" id="6.3.5.2"/>
    </reaction>
</comment>
<comment type="cofactor">
    <cofactor evidence="3">
        <name>Mg(2+)</name>
        <dbReference type="ChEBI" id="CHEBI:18420"/>
    </cofactor>
</comment>
<comment type="pathway">
    <text evidence="1">Purine metabolism; GMP biosynthesis; GMP from XMP (L-Gln route): step 1/1.</text>
</comment>
<comment type="subunit">
    <text evidence="3">Homodimer.</text>
</comment>
<comment type="subcellular location">
    <subcellularLocation>
        <location evidence="4">Cytoplasm</location>
        <location evidence="4">Cytosol</location>
    </subcellularLocation>
</comment>
<gene>
    <name type="primary">GUA1</name>
    <name type="ORF">SNOG_08840</name>
</gene>
<protein>
    <recommendedName>
        <fullName>GMP synthase [glutamine-hydrolyzing]</fullName>
        <ecNumber evidence="1">6.3.5.2</ecNumber>
    </recommendedName>
    <alternativeName>
        <fullName>GMP synthetase</fullName>
    </alternativeName>
    <alternativeName>
        <fullName>Glutamine amidotransferase</fullName>
    </alternativeName>
</protein>
<keyword id="KW-0067">ATP-binding</keyword>
<keyword id="KW-0963">Cytoplasm</keyword>
<keyword id="KW-0315">Glutamine amidotransferase</keyword>
<keyword id="KW-0332">GMP biosynthesis</keyword>
<keyword id="KW-0436">Ligase</keyword>
<keyword id="KW-0460">Magnesium</keyword>
<keyword id="KW-0547">Nucleotide-binding</keyword>
<keyword id="KW-0658">Purine biosynthesis</keyword>
<reference key="1">
    <citation type="journal article" date="2007" name="Plant Cell">
        <title>Dothideomycete-plant interactions illuminated by genome sequencing and EST analysis of the wheat pathogen Stagonospora nodorum.</title>
        <authorList>
            <person name="Hane J.K."/>
            <person name="Lowe R.G.T."/>
            <person name="Solomon P.S."/>
            <person name="Tan K.-C."/>
            <person name="Schoch C.L."/>
            <person name="Spatafora J.W."/>
            <person name="Crous P.W."/>
            <person name="Kodira C.D."/>
            <person name="Birren B.W."/>
            <person name="Galagan J.E."/>
            <person name="Torriani S.F.F."/>
            <person name="McDonald B.A."/>
            <person name="Oliver R.P."/>
        </authorList>
    </citation>
    <scope>NUCLEOTIDE SEQUENCE [LARGE SCALE GENOMIC DNA]</scope>
    <source>
        <strain>SN15 / ATCC MYA-4574 / FGSC 10173</strain>
    </source>
</reference>
<feature type="chain" id="PRO_0000286153" description="GMP synthase [glutamine-hydrolyzing]">
    <location>
        <begin position="1"/>
        <end position="541"/>
    </location>
</feature>
<feature type="domain" description="Glutamine amidotransferase type-1" evidence="5">
    <location>
        <begin position="17"/>
        <end position="212"/>
    </location>
</feature>
<feature type="domain" description="GMPS ATP-PPase" evidence="6">
    <location>
        <begin position="213"/>
        <end position="416"/>
    </location>
</feature>
<feature type="active site" description="Nucleophile" evidence="5">
    <location>
        <position position="93"/>
    </location>
</feature>
<feature type="active site" evidence="5">
    <location>
        <position position="186"/>
    </location>
</feature>
<feature type="active site" evidence="5">
    <location>
        <position position="188"/>
    </location>
</feature>
<feature type="binding site" evidence="6">
    <location>
        <begin position="241"/>
        <end position="247"/>
    </location>
    <ligand>
        <name>ATP</name>
        <dbReference type="ChEBI" id="CHEBI:30616"/>
    </ligand>
</feature>
<feature type="binding site" evidence="2">
    <location>
        <position position="315"/>
    </location>
    <ligand>
        <name>XMP</name>
        <dbReference type="ChEBI" id="CHEBI:57464"/>
    </ligand>
</feature>
<feature type="binding site" evidence="2">
    <location>
        <position position="478"/>
    </location>
    <ligand>
        <name>XMP</name>
        <dbReference type="ChEBI" id="CHEBI:57464"/>
    </ligand>
</feature>
<feature type="binding site" evidence="2">
    <location>
        <position position="533"/>
    </location>
    <ligand>
        <name>XMP</name>
        <dbReference type="ChEBI" id="CHEBI:57464"/>
    </ligand>
</feature>
<feature type="binding site" evidence="2">
    <location>
        <position position="539"/>
    </location>
    <ligand>
        <name>XMP</name>
        <dbReference type="ChEBI" id="CHEBI:57464"/>
    </ligand>
</feature>
<accession>Q0UHC4</accession>
<evidence type="ECO:0000250" key="1">
    <source>
        <dbReference type="UniProtKB" id="P38625"/>
    </source>
</evidence>
<evidence type="ECO:0000250" key="2">
    <source>
        <dbReference type="UniProtKB" id="P49915"/>
    </source>
</evidence>
<evidence type="ECO:0000250" key="3">
    <source>
        <dbReference type="UniProtKB" id="Q4WFT3"/>
    </source>
</evidence>
<evidence type="ECO:0000250" key="4">
    <source>
        <dbReference type="UniProtKB" id="Q9P772"/>
    </source>
</evidence>
<evidence type="ECO:0000255" key="5">
    <source>
        <dbReference type="PROSITE-ProRule" id="PRU00605"/>
    </source>
</evidence>
<evidence type="ECO:0000255" key="6">
    <source>
        <dbReference type="PROSITE-ProRule" id="PRU00886"/>
    </source>
</evidence>
<sequence>MATDGSDPIPPHKTFDTILVLDFGSQYTHLITRRLRELNVYSEMLPCNTKLADLPFTPKGIILSGGPYSVYEEGAPHVDHAVFDLGVPILGICYGLQEMAWHFGKNAGVAAGEKREYGHANLKVESHGGHMDELFKDVGNELEVWMSHGDKLSNMPENFTTVATTTNAPFAGIAHKEKKYYGIQFHPEVTHTKMGKTVLKNFAVDICQSTTDWTMGKFVDQEITRIRKLVGEKGQVIGAVSGGVDSTVAAKLMKEAIGDRFHAVMVDNGVLRLNEAKQVKETLEKGLGINLTVIDASDMFLDRLKGITDNPEQKRKVIGNTFIEIFQEKAKEIAAAAKNSSNAGEIEWLLQGTLYPDVIESLSFKGPSQTIKTHHNVGGLPANMNLKLIEPLRELFKDEVRALGVELGIPEDLVWRHPFPGPGIAIRILGEVTREQVRIAREADYIFIEEIKAAGLYRNISQAFAALLPVKAVGVMGDKRVHDQVIALRAVETTDFMTADWYPFDGEFLKRVSRRIVNEVNGVCRVVYDITSKPPGTIEME</sequence>